<reference key="1">
    <citation type="journal article" date="2003" name="Proc. Natl. Acad. Sci. U.S.A.">
        <title>The genome of Nanoarchaeum equitans: insights into early archaeal evolution and derived parasitism.</title>
        <authorList>
            <person name="Waters E."/>
            <person name="Hohn M.J."/>
            <person name="Ahel I."/>
            <person name="Graham D.E."/>
            <person name="Adams M.D."/>
            <person name="Barnstead M."/>
            <person name="Beeson K.Y."/>
            <person name="Bibbs L."/>
            <person name="Bolanos R."/>
            <person name="Keller M."/>
            <person name="Kretz K."/>
            <person name="Lin X."/>
            <person name="Mathur E."/>
            <person name="Ni J."/>
            <person name="Podar M."/>
            <person name="Richardson T."/>
            <person name="Sutton G.G."/>
            <person name="Simon M."/>
            <person name="Soell D."/>
            <person name="Stetter K.O."/>
            <person name="Short J.M."/>
            <person name="Noorderwier M."/>
        </authorList>
    </citation>
    <scope>NUCLEOTIDE SEQUENCE [LARGE SCALE GENOMIC DNA]</scope>
    <source>
        <strain>Kin4-M</strain>
    </source>
</reference>
<keyword id="KW-1185">Reference proteome</keyword>
<keyword id="KW-0687">Ribonucleoprotein</keyword>
<keyword id="KW-0689">Ribosomal protein</keyword>
<proteinExistence type="inferred from homology"/>
<dbReference type="EMBL" id="AE017199">
    <property type="protein sequence ID" value="AAR38939.1"/>
    <property type="molecule type" value="Genomic_DNA"/>
</dbReference>
<dbReference type="SMR" id="Q74MI5"/>
<dbReference type="STRING" id="228908.NEQ083"/>
<dbReference type="EnsemblBacteria" id="AAR38939">
    <property type="protein sequence ID" value="AAR38939"/>
    <property type="gene ID" value="NEQ083"/>
</dbReference>
<dbReference type="KEGG" id="neq:NEQ083"/>
<dbReference type="PATRIC" id="fig|228908.8.peg.87"/>
<dbReference type="HOGENOM" id="CLU_122625_0_1_2"/>
<dbReference type="Proteomes" id="UP000000578">
    <property type="component" value="Chromosome"/>
</dbReference>
<dbReference type="GO" id="GO:0015935">
    <property type="term" value="C:small ribosomal subunit"/>
    <property type="evidence" value="ECO:0007669"/>
    <property type="project" value="InterPro"/>
</dbReference>
<dbReference type="GO" id="GO:0003735">
    <property type="term" value="F:structural constituent of ribosome"/>
    <property type="evidence" value="ECO:0007669"/>
    <property type="project" value="InterPro"/>
</dbReference>
<dbReference type="GO" id="GO:0000049">
    <property type="term" value="F:tRNA binding"/>
    <property type="evidence" value="ECO:0007669"/>
    <property type="project" value="UniProtKB-UniRule"/>
</dbReference>
<dbReference type="GO" id="GO:0006412">
    <property type="term" value="P:translation"/>
    <property type="evidence" value="ECO:0007669"/>
    <property type="project" value="UniProtKB-UniRule"/>
</dbReference>
<dbReference type="Gene3D" id="3.30.70.600">
    <property type="entry name" value="Ribosomal protein S10 domain"/>
    <property type="match status" value="1"/>
</dbReference>
<dbReference type="HAMAP" id="MF_00508">
    <property type="entry name" value="Ribosomal_uS10"/>
    <property type="match status" value="1"/>
</dbReference>
<dbReference type="InterPro" id="IPR001848">
    <property type="entry name" value="Ribosomal_uS10"/>
</dbReference>
<dbReference type="InterPro" id="IPR018268">
    <property type="entry name" value="Ribosomal_uS10_CS"/>
</dbReference>
<dbReference type="InterPro" id="IPR027486">
    <property type="entry name" value="Ribosomal_uS10_dom"/>
</dbReference>
<dbReference type="InterPro" id="IPR036838">
    <property type="entry name" value="Ribosomal_uS10_dom_sf"/>
</dbReference>
<dbReference type="InterPro" id="IPR005729">
    <property type="entry name" value="Ribosomal_uS10_euk/arc"/>
</dbReference>
<dbReference type="NCBIfam" id="TIGR01046">
    <property type="entry name" value="uS10_euk_arch"/>
    <property type="match status" value="1"/>
</dbReference>
<dbReference type="PANTHER" id="PTHR11700">
    <property type="entry name" value="30S RIBOSOMAL PROTEIN S10 FAMILY MEMBER"/>
    <property type="match status" value="1"/>
</dbReference>
<dbReference type="Pfam" id="PF00338">
    <property type="entry name" value="Ribosomal_S10"/>
    <property type="match status" value="1"/>
</dbReference>
<dbReference type="PRINTS" id="PR00971">
    <property type="entry name" value="RIBOSOMALS10"/>
</dbReference>
<dbReference type="SMART" id="SM01403">
    <property type="entry name" value="Ribosomal_S10"/>
    <property type="match status" value="1"/>
</dbReference>
<dbReference type="SUPFAM" id="SSF54999">
    <property type="entry name" value="Ribosomal protein S10"/>
    <property type="match status" value="1"/>
</dbReference>
<dbReference type="PROSITE" id="PS00361">
    <property type="entry name" value="RIBOSOMAL_S10"/>
    <property type="match status" value="1"/>
</dbReference>
<sequence>MPFLRIKIYSTDLEELNRVVEKIKEIVKQTGVKMRGPIPLPTKILRVPVLRITGHRGTKIWDTYQMRIHRRIIDIATDDRTIKLLMRTPLITKPEKIQIQLKYIKDKNL</sequence>
<evidence type="ECO:0000255" key="1">
    <source>
        <dbReference type="HAMAP-Rule" id="MF_00508"/>
    </source>
</evidence>
<evidence type="ECO:0000305" key="2"/>
<name>RS10_NANEQ</name>
<accession>Q74MI5</accession>
<organism>
    <name type="scientific">Nanoarchaeum equitans (strain Kin4-M)</name>
    <dbReference type="NCBI Taxonomy" id="228908"/>
    <lineage>
        <taxon>Archaea</taxon>
        <taxon>Nanobdellota</taxon>
        <taxon>Candidatus Nanoarchaeia</taxon>
        <taxon>Nanoarchaeales</taxon>
        <taxon>Nanoarchaeaceae</taxon>
        <taxon>Nanoarchaeum</taxon>
    </lineage>
</organism>
<gene>
    <name evidence="1" type="primary">rps10</name>
    <name type="ordered locus">NEQ083</name>
</gene>
<protein>
    <recommendedName>
        <fullName evidence="1">Small ribosomal subunit protein uS10</fullName>
    </recommendedName>
    <alternativeName>
        <fullName evidence="2">30S ribosomal protein S10</fullName>
    </alternativeName>
</protein>
<comment type="function">
    <text evidence="1">Involved in the binding of tRNA to the ribosomes.</text>
</comment>
<comment type="subunit">
    <text evidence="1">Part of the 30S ribosomal subunit.</text>
</comment>
<comment type="similarity">
    <text evidence="1">Belongs to the universal ribosomal protein uS10 family.</text>
</comment>
<feature type="chain" id="PRO_0000258583" description="Small ribosomal subunit protein uS10">
    <location>
        <begin position="1"/>
        <end position="109"/>
    </location>
</feature>